<accession>Q672I7</accession>
<evidence type="ECO:0000255" key="1">
    <source>
        <dbReference type="HAMAP-Rule" id="MF_01310"/>
    </source>
</evidence>
<evidence type="ECO:0000305" key="2"/>
<geneLocation type="chloroplast"/>
<reference key="1">
    <citation type="submission" date="2004-07" db="EMBL/GenBank/DDBJ databases">
        <authorList>
            <person name="Nallar S.C."/>
            <person name="Nekkalapudi S.C."/>
            <person name="Podile A.R."/>
        </authorList>
    </citation>
    <scope>NUCLEOTIDE SEQUENCE [GENOMIC DNA]</scope>
</reference>
<sequence>MTKTIPKIGSRKKVRIGLRRNARFSLRKSARRITKGVIHVQASFNNTIITVTDPQGRVVFWSSAGTCGFKSSRKASPYAGQRTAVDAIRTVGLQRAEVMVKGAGSGRDAALRAIAKSGVRLSCIRDVTPMPHNGCRPPKKRRL</sequence>
<gene>
    <name evidence="1" type="primary">rps11</name>
</gene>
<comment type="subunit">
    <text evidence="1">Part of the 30S ribosomal subunit.</text>
</comment>
<comment type="subcellular location">
    <subcellularLocation>
        <location>Plastid</location>
        <location>Chloroplast</location>
    </subcellularLocation>
</comment>
<comment type="similarity">
    <text evidence="1">Belongs to the universal ribosomal protein uS11 family.</text>
</comment>
<feature type="chain" id="PRO_0000123318" description="Small ribosomal subunit protein uS11c">
    <location>
        <begin position="1"/>
        <end position="143"/>
    </location>
</feature>
<protein>
    <recommendedName>
        <fullName evidence="1">Small ribosomal subunit protein uS11c</fullName>
    </recommendedName>
    <alternativeName>
        <fullName evidence="2">30S ribosomal protein S11, chloroplastic</fullName>
    </alternativeName>
</protein>
<keyword id="KW-0150">Chloroplast</keyword>
<keyword id="KW-0934">Plastid</keyword>
<keyword id="KW-0687">Ribonucleoprotein</keyword>
<keyword id="KW-0689">Ribosomal protein</keyword>
<keyword id="KW-0694">RNA-binding</keyword>
<keyword id="KW-0699">rRNA-binding</keyword>
<name>RR11_CENAM</name>
<dbReference type="EMBL" id="AY694131">
    <property type="protein sequence ID" value="AAU12165.1"/>
    <property type="molecule type" value="Genomic_DNA"/>
</dbReference>
<dbReference type="SMR" id="Q672I7"/>
<dbReference type="GO" id="GO:0009507">
    <property type="term" value="C:chloroplast"/>
    <property type="evidence" value="ECO:0007669"/>
    <property type="project" value="UniProtKB-SubCell"/>
</dbReference>
<dbReference type="GO" id="GO:1990904">
    <property type="term" value="C:ribonucleoprotein complex"/>
    <property type="evidence" value="ECO:0007669"/>
    <property type="project" value="UniProtKB-KW"/>
</dbReference>
<dbReference type="GO" id="GO:0005840">
    <property type="term" value="C:ribosome"/>
    <property type="evidence" value="ECO:0007669"/>
    <property type="project" value="UniProtKB-KW"/>
</dbReference>
<dbReference type="GO" id="GO:0019843">
    <property type="term" value="F:rRNA binding"/>
    <property type="evidence" value="ECO:0007669"/>
    <property type="project" value="UniProtKB-UniRule"/>
</dbReference>
<dbReference type="GO" id="GO:0003735">
    <property type="term" value="F:structural constituent of ribosome"/>
    <property type="evidence" value="ECO:0007669"/>
    <property type="project" value="InterPro"/>
</dbReference>
<dbReference type="GO" id="GO:0006412">
    <property type="term" value="P:translation"/>
    <property type="evidence" value="ECO:0007669"/>
    <property type="project" value="UniProtKB-UniRule"/>
</dbReference>
<dbReference type="FunFam" id="3.30.420.80:FF:000003">
    <property type="entry name" value="30S ribosomal protein S11, chloroplastic"/>
    <property type="match status" value="1"/>
</dbReference>
<dbReference type="Gene3D" id="3.30.420.80">
    <property type="entry name" value="Ribosomal protein S11"/>
    <property type="match status" value="1"/>
</dbReference>
<dbReference type="HAMAP" id="MF_01310">
    <property type="entry name" value="Ribosomal_uS11"/>
    <property type="match status" value="1"/>
</dbReference>
<dbReference type="InterPro" id="IPR001971">
    <property type="entry name" value="Ribosomal_uS11"/>
</dbReference>
<dbReference type="InterPro" id="IPR018102">
    <property type="entry name" value="Ribosomal_uS11_CS"/>
</dbReference>
<dbReference type="InterPro" id="IPR036967">
    <property type="entry name" value="Ribosomal_uS11_sf"/>
</dbReference>
<dbReference type="NCBIfam" id="NF003698">
    <property type="entry name" value="PRK05309.1"/>
    <property type="match status" value="1"/>
</dbReference>
<dbReference type="PANTHER" id="PTHR11759">
    <property type="entry name" value="40S RIBOSOMAL PROTEIN S14/30S RIBOSOMAL PROTEIN S11"/>
    <property type="match status" value="1"/>
</dbReference>
<dbReference type="Pfam" id="PF00411">
    <property type="entry name" value="Ribosomal_S11"/>
    <property type="match status" value="1"/>
</dbReference>
<dbReference type="PIRSF" id="PIRSF002131">
    <property type="entry name" value="Ribosomal_S11"/>
    <property type="match status" value="1"/>
</dbReference>
<dbReference type="SUPFAM" id="SSF53137">
    <property type="entry name" value="Translational machinery components"/>
    <property type="match status" value="1"/>
</dbReference>
<dbReference type="PROSITE" id="PS00054">
    <property type="entry name" value="RIBOSOMAL_S11"/>
    <property type="match status" value="1"/>
</dbReference>
<proteinExistence type="inferred from homology"/>
<organism>
    <name type="scientific">Cenchrus americanus</name>
    <name type="common">Pearl millet</name>
    <name type="synonym">Pennisetum glaucum</name>
    <dbReference type="NCBI Taxonomy" id="4543"/>
    <lineage>
        <taxon>Eukaryota</taxon>
        <taxon>Viridiplantae</taxon>
        <taxon>Streptophyta</taxon>
        <taxon>Embryophyta</taxon>
        <taxon>Tracheophyta</taxon>
        <taxon>Spermatophyta</taxon>
        <taxon>Magnoliopsida</taxon>
        <taxon>Liliopsida</taxon>
        <taxon>Poales</taxon>
        <taxon>Poaceae</taxon>
        <taxon>PACMAD clade</taxon>
        <taxon>Panicoideae</taxon>
        <taxon>Panicodae</taxon>
        <taxon>Paniceae</taxon>
        <taxon>Cenchrinae</taxon>
        <taxon>Cenchrus</taxon>
    </lineage>
</organism>